<dbReference type="EMBL" id="AC084218">
    <property type="protein sequence ID" value="AAV32196.1"/>
    <property type="status" value="ALT_SEQ"/>
    <property type="molecule type" value="Genomic_DNA"/>
</dbReference>
<dbReference type="EMBL" id="AP008211">
    <property type="protein sequence ID" value="BAF16580.2"/>
    <property type="status" value="ALT_SEQ"/>
    <property type="molecule type" value="Genomic_DNA"/>
</dbReference>
<dbReference type="EMBL" id="AP014961">
    <property type="protein sequence ID" value="BAS92300.1"/>
    <property type="molecule type" value="Genomic_DNA"/>
</dbReference>
<dbReference type="EMBL" id="CM000142">
    <property type="protein sequence ID" value="EEE62352.1"/>
    <property type="status" value="ALT_SEQ"/>
    <property type="molecule type" value="Genomic_DNA"/>
</dbReference>
<dbReference type="RefSeq" id="XP_015639834.1">
    <property type="nucleotide sequence ID" value="XM_015784348.1"/>
</dbReference>
<dbReference type="SMR" id="Q0DKP3"/>
<dbReference type="FunCoup" id="Q0DKP3">
    <property type="interactions" value="464"/>
</dbReference>
<dbReference type="STRING" id="39947.Q0DKP3"/>
<dbReference type="PaxDb" id="39947-Q0DKP3"/>
<dbReference type="EnsemblPlants" id="Os05t0150500-01">
    <property type="protein sequence ID" value="Os05t0150500-01"/>
    <property type="gene ID" value="Os05g0150500"/>
</dbReference>
<dbReference type="Gramene" id="Os05t0150500-01">
    <property type="protein sequence ID" value="Os05t0150500-01"/>
    <property type="gene ID" value="Os05g0150500"/>
</dbReference>
<dbReference type="KEGG" id="dosa:Os05g0150500"/>
<dbReference type="eggNOG" id="KOG1947">
    <property type="taxonomic scope" value="Eukaryota"/>
</dbReference>
<dbReference type="HOGENOM" id="CLU_022456_1_0_1"/>
<dbReference type="InParanoid" id="Q0DKP3"/>
<dbReference type="OMA" id="TDDCLEM"/>
<dbReference type="OrthoDB" id="423607at2759"/>
<dbReference type="PlantReactome" id="R-OSA-5608118">
    <property type="pathway name" value="Auxin signalling"/>
</dbReference>
<dbReference type="PlantReactome" id="R-OSA-9030557">
    <property type="pathway name" value="Lateral root initiation"/>
</dbReference>
<dbReference type="PlantReactome" id="R-OSA-9608575">
    <property type="pathway name" value="Reproductive meristem phase change"/>
</dbReference>
<dbReference type="UniPathway" id="UPA00143"/>
<dbReference type="Proteomes" id="UP000000763">
    <property type="component" value="Chromosome 5"/>
</dbReference>
<dbReference type="Proteomes" id="UP000007752">
    <property type="component" value="Chromosome 5"/>
</dbReference>
<dbReference type="Proteomes" id="UP000059680">
    <property type="component" value="Chromosome 5"/>
</dbReference>
<dbReference type="GO" id="GO:0005634">
    <property type="term" value="C:nucleus"/>
    <property type="evidence" value="ECO:0007669"/>
    <property type="project" value="UniProtKB-SubCell"/>
</dbReference>
<dbReference type="GO" id="GO:0019005">
    <property type="term" value="C:SCF ubiquitin ligase complex"/>
    <property type="evidence" value="ECO:0000250"/>
    <property type="project" value="UniProtKB"/>
</dbReference>
<dbReference type="GO" id="GO:0010011">
    <property type="term" value="F:auxin binding"/>
    <property type="evidence" value="ECO:0000250"/>
    <property type="project" value="UniProtKB"/>
</dbReference>
<dbReference type="GO" id="GO:0000822">
    <property type="term" value="F:inositol hexakisphosphate binding"/>
    <property type="evidence" value="ECO:0000250"/>
    <property type="project" value="UniProtKB"/>
</dbReference>
<dbReference type="GO" id="GO:0009734">
    <property type="term" value="P:auxin-activated signaling pathway"/>
    <property type="evidence" value="ECO:0000250"/>
    <property type="project" value="UniProtKB"/>
</dbReference>
<dbReference type="GO" id="GO:0016567">
    <property type="term" value="P:protein ubiquitination"/>
    <property type="evidence" value="ECO:0007669"/>
    <property type="project" value="UniProtKB-UniPathway"/>
</dbReference>
<dbReference type="GO" id="GO:0031146">
    <property type="term" value="P:SCF-dependent proteasomal ubiquitin-dependent protein catabolic process"/>
    <property type="evidence" value="ECO:0000318"/>
    <property type="project" value="GO_Central"/>
</dbReference>
<dbReference type="FunFam" id="3.80.10.10:FF:000029">
    <property type="entry name" value="Transport inhibitor response 1"/>
    <property type="match status" value="1"/>
</dbReference>
<dbReference type="Gene3D" id="1.20.1280.50">
    <property type="match status" value="1"/>
</dbReference>
<dbReference type="Gene3D" id="3.80.10.10">
    <property type="entry name" value="Ribonuclease Inhibitor"/>
    <property type="match status" value="1"/>
</dbReference>
<dbReference type="InterPro" id="IPR041567">
    <property type="entry name" value="COI1_F-box"/>
</dbReference>
<dbReference type="InterPro" id="IPR036047">
    <property type="entry name" value="F-box-like_dom_sf"/>
</dbReference>
<dbReference type="InterPro" id="IPR001611">
    <property type="entry name" value="Leu-rich_rpt"/>
</dbReference>
<dbReference type="InterPro" id="IPR006553">
    <property type="entry name" value="Leu-rich_rpt_Cys-con_subtyp"/>
</dbReference>
<dbReference type="InterPro" id="IPR032675">
    <property type="entry name" value="LRR_dom_sf"/>
</dbReference>
<dbReference type="InterPro" id="IPR041101">
    <property type="entry name" value="Transp_inhibit"/>
</dbReference>
<dbReference type="PANTHER" id="PTHR16134">
    <property type="entry name" value="F-BOX/TPR REPEAT PROTEIN POF3"/>
    <property type="match status" value="1"/>
</dbReference>
<dbReference type="PANTHER" id="PTHR16134:SF66">
    <property type="entry name" value="PROTEIN TRANSPORT INHIBITOR RESPONSE 1"/>
    <property type="match status" value="1"/>
</dbReference>
<dbReference type="Pfam" id="PF18511">
    <property type="entry name" value="F-box_5"/>
    <property type="match status" value="1"/>
</dbReference>
<dbReference type="Pfam" id="PF13516">
    <property type="entry name" value="LRR_6"/>
    <property type="match status" value="1"/>
</dbReference>
<dbReference type="Pfam" id="PF18791">
    <property type="entry name" value="Transp_inhibit"/>
    <property type="match status" value="1"/>
</dbReference>
<dbReference type="SMART" id="SM00367">
    <property type="entry name" value="LRR_CC"/>
    <property type="match status" value="3"/>
</dbReference>
<dbReference type="SUPFAM" id="SSF81383">
    <property type="entry name" value="F-box domain"/>
    <property type="match status" value="1"/>
</dbReference>
<dbReference type="SUPFAM" id="SSF52047">
    <property type="entry name" value="RNI-like"/>
    <property type="match status" value="1"/>
</dbReference>
<evidence type="ECO:0000250" key="1"/>
<evidence type="ECO:0000305" key="2"/>
<gene>
    <name type="ordered locus">Os05g0150500</name>
    <name type="ordered locus">LOC_Os05g05800</name>
    <name type="ORF">OsJ_17141</name>
    <name type="ORF">P0001A07.4</name>
</gene>
<keyword id="KW-0927">Auxin signaling pathway</keyword>
<keyword id="KW-0539">Nucleus</keyword>
<keyword id="KW-1185">Reference proteome</keyword>
<keyword id="KW-0833">Ubl conjugation pathway</keyword>
<reference key="1">
    <citation type="journal article" date="2005" name="Mol. Genet. Genomics">
        <title>A fine physical map of the rice chromosome 5.</title>
        <authorList>
            <person name="Cheng C.-H."/>
            <person name="Chung M.C."/>
            <person name="Liu S.-M."/>
            <person name="Chen S.-K."/>
            <person name="Kao F.Y."/>
            <person name="Lin S.-J."/>
            <person name="Hsiao S.-H."/>
            <person name="Tseng I.C."/>
            <person name="Hsing Y.-I.C."/>
            <person name="Wu H.-P."/>
            <person name="Chen C.-S."/>
            <person name="Shaw J.-F."/>
            <person name="Wu J."/>
            <person name="Matsumoto T."/>
            <person name="Sasaki T."/>
            <person name="Chen H.-C."/>
            <person name="Chow T.-Y."/>
        </authorList>
    </citation>
    <scope>NUCLEOTIDE SEQUENCE [LARGE SCALE GENOMIC DNA]</scope>
    <source>
        <strain>cv. Nipponbare</strain>
    </source>
</reference>
<reference key="2">
    <citation type="journal article" date="2005" name="Nature">
        <title>The map-based sequence of the rice genome.</title>
        <authorList>
            <consortium name="International rice genome sequencing project (IRGSP)"/>
        </authorList>
    </citation>
    <scope>NUCLEOTIDE SEQUENCE [LARGE SCALE GENOMIC DNA]</scope>
    <source>
        <strain>cv. Nipponbare</strain>
    </source>
</reference>
<reference key="3">
    <citation type="journal article" date="2008" name="Nucleic Acids Res.">
        <title>The rice annotation project database (RAP-DB): 2008 update.</title>
        <authorList>
            <consortium name="The rice annotation project (RAP)"/>
        </authorList>
    </citation>
    <scope>GENOME REANNOTATION</scope>
    <source>
        <strain>cv. Nipponbare</strain>
    </source>
</reference>
<reference key="4">
    <citation type="journal article" date="2013" name="Rice">
        <title>Improvement of the Oryza sativa Nipponbare reference genome using next generation sequence and optical map data.</title>
        <authorList>
            <person name="Kawahara Y."/>
            <person name="de la Bastide M."/>
            <person name="Hamilton J.P."/>
            <person name="Kanamori H."/>
            <person name="McCombie W.R."/>
            <person name="Ouyang S."/>
            <person name="Schwartz D.C."/>
            <person name="Tanaka T."/>
            <person name="Wu J."/>
            <person name="Zhou S."/>
            <person name="Childs K.L."/>
            <person name="Davidson R.M."/>
            <person name="Lin H."/>
            <person name="Quesada-Ocampo L."/>
            <person name="Vaillancourt B."/>
            <person name="Sakai H."/>
            <person name="Lee S.S."/>
            <person name="Kim J."/>
            <person name="Numa H."/>
            <person name="Itoh T."/>
            <person name="Buell C.R."/>
            <person name="Matsumoto T."/>
        </authorList>
    </citation>
    <scope>GENOME REANNOTATION</scope>
    <source>
        <strain>cv. Nipponbare</strain>
    </source>
</reference>
<reference key="5">
    <citation type="journal article" date="2005" name="PLoS Biol.">
        <title>The genomes of Oryza sativa: a history of duplications.</title>
        <authorList>
            <person name="Yu J."/>
            <person name="Wang J."/>
            <person name="Lin W."/>
            <person name="Li S."/>
            <person name="Li H."/>
            <person name="Zhou J."/>
            <person name="Ni P."/>
            <person name="Dong W."/>
            <person name="Hu S."/>
            <person name="Zeng C."/>
            <person name="Zhang J."/>
            <person name="Zhang Y."/>
            <person name="Li R."/>
            <person name="Xu Z."/>
            <person name="Li S."/>
            <person name="Li X."/>
            <person name="Zheng H."/>
            <person name="Cong L."/>
            <person name="Lin L."/>
            <person name="Yin J."/>
            <person name="Geng J."/>
            <person name="Li G."/>
            <person name="Shi J."/>
            <person name="Liu J."/>
            <person name="Lv H."/>
            <person name="Li J."/>
            <person name="Wang J."/>
            <person name="Deng Y."/>
            <person name="Ran L."/>
            <person name="Shi X."/>
            <person name="Wang X."/>
            <person name="Wu Q."/>
            <person name="Li C."/>
            <person name="Ren X."/>
            <person name="Wang J."/>
            <person name="Wang X."/>
            <person name="Li D."/>
            <person name="Liu D."/>
            <person name="Zhang X."/>
            <person name="Ji Z."/>
            <person name="Zhao W."/>
            <person name="Sun Y."/>
            <person name="Zhang Z."/>
            <person name="Bao J."/>
            <person name="Han Y."/>
            <person name="Dong L."/>
            <person name="Ji J."/>
            <person name="Chen P."/>
            <person name="Wu S."/>
            <person name="Liu J."/>
            <person name="Xiao Y."/>
            <person name="Bu D."/>
            <person name="Tan J."/>
            <person name="Yang L."/>
            <person name="Ye C."/>
            <person name="Zhang J."/>
            <person name="Xu J."/>
            <person name="Zhou Y."/>
            <person name="Yu Y."/>
            <person name="Zhang B."/>
            <person name="Zhuang S."/>
            <person name="Wei H."/>
            <person name="Liu B."/>
            <person name="Lei M."/>
            <person name="Yu H."/>
            <person name="Li Y."/>
            <person name="Xu H."/>
            <person name="Wei S."/>
            <person name="He X."/>
            <person name="Fang L."/>
            <person name="Zhang Z."/>
            <person name="Zhang Y."/>
            <person name="Huang X."/>
            <person name="Su Z."/>
            <person name="Tong W."/>
            <person name="Li J."/>
            <person name="Tong Z."/>
            <person name="Li S."/>
            <person name="Ye J."/>
            <person name="Wang L."/>
            <person name="Fang L."/>
            <person name="Lei T."/>
            <person name="Chen C.-S."/>
            <person name="Chen H.-C."/>
            <person name="Xu Z."/>
            <person name="Li H."/>
            <person name="Huang H."/>
            <person name="Zhang F."/>
            <person name="Xu H."/>
            <person name="Li N."/>
            <person name="Zhao C."/>
            <person name="Li S."/>
            <person name="Dong L."/>
            <person name="Huang Y."/>
            <person name="Li L."/>
            <person name="Xi Y."/>
            <person name="Qi Q."/>
            <person name="Li W."/>
            <person name="Zhang B."/>
            <person name="Hu W."/>
            <person name="Zhang Y."/>
            <person name="Tian X."/>
            <person name="Jiao Y."/>
            <person name="Liang X."/>
            <person name="Jin J."/>
            <person name="Gao L."/>
            <person name="Zheng W."/>
            <person name="Hao B."/>
            <person name="Liu S.-M."/>
            <person name="Wang W."/>
            <person name="Yuan L."/>
            <person name="Cao M."/>
            <person name="McDermott J."/>
            <person name="Samudrala R."/>
            <person name="Wang J."/>
            <person name="Wong G.K.-S."/>
            <person name="Yang H."/>
        </authorList>
    </citation>
    <scope>NUCLEOTIDE SEQUENCE [LARGE SCALE GENOMIC DNA]</scope>
    <source>
        <strain>cv. Nipponbare</strain>
    </source>
</reference>
<feature type="chain" id="PRO_0000370731" description="Transport inhibitor response 1-like protein Os05g0150500">
    <location>
        <begin position="1"/>
        <end position="587"/>
    </location>
</feature>
<feature type="domain" description="F-box">
    <location>
        <begin position="6"/>
        <end position="63"/>
    </location>
</feature>
<feature type="region of interest" description="Interaction with auxin-responsive proteins" evidence="1">
    <location>
        <begin position="92"/>
        <end position="93"/>
    </location>
</feature>
<feature type="region of interest" description="Interaction with auxin-responsive proteins" evidence="1">
    <location>
        <begin position="358"/>
        <end position="363"/>
    </location>
</feature>
<feature type="region of interest" description="Interaction with auxin-responsive proteins" evidence="1">
    <location>
        <begin position="413"/>
        <end position="417"/>
    </location>
</feature>
<feature type="region of interest" description="Interaction with auxin-responsive proteins" evidence="1">
    <location>
        <begin position="472"/>
        <end position="473"/>
    </location>
</feature>
<feature type="binding site" evidence="1">
    <location>
        <position position="85"/>
    </location>
    <ligand>
        <name>1D-myo-inositol hexakisphosphate</name>
        <dbReference type="ChEBI" id="CHEBI:58130"/>
    </ligand>
</feature>
<feature type="binding site" evidence="1">
    <location>
        <begin position="124"/>
        <end position="125"/>
    </location>
    <ligand>
        <name>1D-myo-inositol hexakisphosphate</name>
        <dbReference type="ChEBI" id="CHEBI:58130"/>
    </ligand>
</feature>
<feature type="binding site" evidence="1">
    <location>
        <position position="355"/>
    </location>
    <ligand>
        <name>1D-myo-inositol hexakisphosphate</name>
        <dbReference type="ChEBI" id="CHEBI:58130"/>
    </ligand>
</feature>
<feature type="binding site" evidence="1">
    <location>
        <begin position="409"/>
        <end position="411"/>
    </location>
    <ligand>
        <name>1D-myo-inositol hexakisphosphate</name>
        <dbReference type="ChEBI" id="CHEBI:58130"/>
    </ligand>
</feature>
<feature type="binding site" evidence="1">
    <location>
        <position position="444"/>
    </location>
    <ligand>
        <name>1D-myo-inositol hexakisphosphate</name>
        <dbReference type="ChEBI" id="CHEBI:58130"/>
    </ligand>
</feature>
<feature type="binding site" evidence="1">
    <location>
        <begin position="492"/>
        <end position="493"/>
    </location>
    <ligand>
        <name>1D-myo-inositol hexakisphosphate</name>
        <dbReference type="ChEBI" id="CHEBI:58130"/>
    </ligand>
</feature>
<feature type="binding site" evidence="1">
    <location>
        <position position="517"/>
    </location>
    <ligand>
        <name>1D-myo-inositol hexakisphosphate</name>
        <dbReference type="ChEBI" id="CHEBI:58130"/>
    </ligand>
</feature>
<feature type="site" description="Interaction with auxin-responsive proteins" evidence="1">
    <location>
        <position position="150"/>
    </location>
</feature>
<feature type="site" description="Interaction with auxin-responsive proteins" evidence="1">
    <location>
        <position position="176"/>
    </location>
</feature>
<feature type="site" description="Interaction with auxin-responsive proteins" evidence="1">
    <location>
        <position position="388"/>
    </location>
</feature>
<feature type="site" description="Interaction with auxin-responsive proteins" evidence="1">
    <location>
        <position position="497"/>
    </location>
</feature>
<name>TIR1A_ORYSJ</name>
<organism>
    <name type="scientific">Oryza sativa subsp. japonica</name>
    <name type="common">Rice</name>
    <dbReference type="NCBI Taxonomy" id="39947"/>
    <lineage>
        <taxon>Eukaryota</taxon>
        <taxon>Viridiplantae</taxon>
        <taxon>Streptophyta</taxon>
        <taxon>Embryophyta</taxon>
        <taxon>Tracheophyta</taxon>
        <taxon>Spermatophyta</taxon>
        <taxon>Magnoliopsida</taxon>
        <taxon>Liliopsida</taxon>
        <taxon>Poales</taxon>
        <taxon>Poaceae</taxon>
        <taxon>BOP clade</taxon>
        <taxon>Oryzoideae</taxon>
        <taxon>Oryzeae</taxon>
        <taxon>Oryzinae</taxon>
        <taxon>Oryza</taxon>
        <taxon>Oryza sativa</taxon>
    </lineage>
</organism>
<comment type="pathway">
    <text>Protein modification; protein ubiquitination.</text>
</comment>
<comment type="subunit">
    <text evidence="1">Part of a SCF (SKP1-cullin-F-box) protein ligase complex. May interact with auxin and auxin-responsive proteins (By similarity).</text>
</comment>
<comment type="subcellular location">
    <subcellularLocation>
        <location evidence="1">Nucleus</location>
    </subcellularLocation>
</comment>
<comment type="domain">
    <text evidence="1">The F-box is necessary for the interaction with SKP1.</text>
</comment>
<comment type="miscellaneous">
    <text evidence="1">The myo-inositol hexakisphosphate acts as a structural cofactor.</text>
</comment>
<comment type="sequence caution" evidence="2">
    <conflict type="erroneous gene model prediction">
        <sequence resource="EMBL-CDS" id="AAV32196"/>
    </conflict>
</comment>
<comment type="sequence caution" evidence="2">
    <conflict type="erroneous gene model prediction">
        <sequence resource="EMBL-CDS" id="BAF16580"/>
    </conflict>
</comment>
<comment type="sequence caution" evidence="2">
    <conflict type="erroneous gene model prediction">
        <sequence resource="EMBL-CDS" id="EEE62352"/>
    </conflict>
</comment>
<sequence length="587" mass="64391">MGRGGSRAACAAAAPPWHSLPDEVWEHAFSFLPAAADRGAAAGACSSWLRAERRSRRRLAVANCYAAAPRDAVERFPSVRAAEVKGKPHFADFGLVPPAWGAAAAPWIAAAADGWPLLEELSFKRMVVTDECLEMIAASFRNFQVLRLVSCDGFSTAGLAAIAAGCRHLRELDLQENEIEDCSIHWLSLFPESFTSLVTLNFSCLEGEVNITVLERLVTRCHNLKTLKLNNAIPLDKLASLLHKAPQLVELGTGKFSADYHSDLFAKLEAAFGGCKSLRRLSGAWDAVPDYLPAFYCVCEGLTSLNLSYATVRGPELIKFISRCRNLQQLWVMDLIEDHGLAVVASSCNKLQELRVFPSDPFGAGFLTERGLVDVSASCPMLESVLYFCRRMTNEALITIAKNRPNFTCFRLCILEPHTPDYITREPLDAGFSAIVESCRGLRRLSISGLLTDLVFKSIGAHADRLEMLSIAFAGNSDLGLHYILSGCKSLKKLEIRDCPFGDKPLLANAAKLETMRSLWMSSCLLTLGACRQLARKMPRLSVEIMNDPGRSCPLDSLPDETPVEKLYVYRTIAGPRSDTPACVQIV</sequence>
<proteinExistence type="evidence at transcript level"/>
<accession>Q0DKP3</accession>
<accession>A0A0P0WI01</accession>
<accession>Q5WN05</accession>
<protein>
    <recommendedName>
        <fullName>Transport inhibitor response 1-like protein Os05g0150500</fullName>
        <shortName>TIR1-like protein</shortName>
    </recommendedName>
</protein>